<name>LIPB_YERPN</name>
<sequence>MMPRLQQHKIILRQLGLQPYAPVSQAMHNFTEFRTDTTPDEIWLVEHQHVFTQGQAGKAEHVLMPGDIPVIQSDRGGQVTYHGPGQQVMYVMVDLKRAKIGVRQLVTAIENTVIETLAHFNIDSHARPDAPGVYVEQQKICSLGLRIRRGCSFHGLALNIAMDLEPFQRINPCGYAGMQMTQVSALQPGVTVADVQPVLVREFTRQLGYPTAKLQPWSLSDYLLSSHSSSSVL</sequence>
<dbReference type="EC" id="2.3.1.181" evidence="1"/>
<dbReference type="EMBL" id="CP000305">
    <property type="protein sequence ID" value="ABG17415.1"/>
    <property type="molecule type" value="Genomic_DNA"/>
</dbReference>
<dbReference type="EMBL" id="ACNQ01000008">
    <property type="protein sequence ID" value="EEO77508.1"/>
    <property type="status" value="ALT_INIT"/>
    <property type="molecule type" value="Genomic_DNA"/>
</dbReference>
<dbReference type="RefSeq" id="WP_002218201.1">
    <property type="nucleotide sequence ID" value="NZ_ACNQ01000008.1"/>
</dbReference>
<dbReference type="SMR" id="Q1CKR5"/>
<dbReference type="GeneID" id="57976096"/>
<dbReference type="KEGG" id="ypn:YPN_1084"/>
<dbReference type="HOGENOM" id="CLU_035168_3_1_6"/>
<dbReference type="UniPathway" id="UPA00538">
    <property type="reaction ID" value="UER00592"/>
</dbReference>
<dbReference type="Proteomes" id="UP000008936">
    <property type="component" value="Chromosome"/>
</dbReference>
<dbReference type="GO" id="GO:0005737">
    <property type="term" value="C:cytoplasm"/>
    <property type="evidence" value="ECO:0007669"/>
    <property type="project" value="UniProtKB-SubCell"/>
</dbReference>
<dbReference type="GO" id="GO:0033819">
    <property type="term" value="F:lipoyl(octanoyl) transferase activity"/>
    <property type="evidence" value="ECO:0007669"/>
    <property type="project" value="UniProtKB-EC"/>
</dbReference>
<dbReference type="GO" id="GO:0036211">
    <property type="term" value="P:protein modification process"/>
    <property type="evidence" value="ECO:0007669"/>
    <property type="project" value="InterPro"/>
</dbReference>
<dbReference type="CDD" id="cd16444">
    <property type="entry name" value="LipB"/>
    <property type="match status" value="1"/>
</dbReference>
<dbReference type="FunFam" id="3.30.930.10:FF:000020">
    <property type="entry name" value="Octanoyltransferase"/>
    <property type="match status" value="1"/>
</dbReference>
<dbReference type="Gene3D" id="3.30.930.10">
    <property type="entry name" value="Bira Bifunctional Protein, Domain 2"/>
    <property type="match status" value="1"/>
</dbReference>
<dbReference type="HAMAP" id="MF_00013">
    <property type="entry name" value="LipB"/>
    <property type="match status" value="1"/>
</dbReference>
<dbReference type="InterPro" id="IPR045864">
    <property type="entry name" value="aa-tRNA-synth_II/BPL/LPL"/>
</dbReference>
<dbReference type="InterPro" id="IPR004143">
    <property type="entry name" value="BPL_LPL_catalytic"/>
</dbReference>
<dbReference type="InterPro" id="IPR000544">
    <property type="entry name" value="Octanoyltransferase"/>
</dbReference>
<dbReference type="InterPro" id="IPR020605">
    <property type="entry name" value="Octanoyltransferase_CS"/>
</dbReference>
<dbReference type="NCBIfam" id="TIGR00214">
    <property type="entry name" value="lipB"/>
    <property type="match status" value="1"/>
</dbReference>
<dbReference type="NCBIfam" id="NF010922">
    <property type="entry name" value="PRK14342.1"/>
    <property type="match status" value="1"/>
</dbReference>
<dbReference type="PANTHER" id="PTHR10993:SF7">
    <property type="entry name" value="LIPOYLTRANSFERASE 2, MITOCHONDRIAL-RELATED"/>
    <property type="match status" value="1"/>
</dbReference>
<dbReference type="PANTHER" id="PTHR10993">
    <property type="entry name" value="OCTANOYLTRANSFERASE"/>
    <property type="match status" value="1"/>
</dbReference>
<dbReference type="Pfam" id="PF21948">
    <property type="entry name" value="LplA-B_cat"/>
    <property type="match status" value="1"/>
</dbReference>
<dbReference type="PIRSF" id="PIRSF016262">
    <property type="entry name" value="LPLase"/>
    <property type="match status" value="1"/>
</dbReference>
<dbReference type="SUPFAM" id="SSF55681">
    <property type="entry name" value="Class II aaRS and biotin synthetases"/>
    <property type="match status" value="1"/>
</dbReference>
<dbReference type="PROSITE" id="PS51733">
    <property type="entry name" value="BPL_LPL_CATALYTIC"/>
    <property type="match status" value="1"/>
</dbReference>
<dbReference type="PROSITE" id="PS01313">
    <property type="entry name" value="LIPB"/>
    <property type="match status" value="1"/>
</dbReference>
<feature type="chain" id="PRO_1000001146" description="Octanoyltransferase">
    <location>
        <begin position="1"/>
        <end position="233"/>
    </location>
</feature>
<feature type="domain" description="BPL/LPL catalytic" evidence="2">
    <location>
        <begin position="36"/>
        <end position="211"/>
    </location>
</feature>
<feature type="active site" description="Acyl-thioester intermediate" evidence="1">
    <location>
        <position position="173"/>
    </location>
</feature>
<feature type="binding site" evidence="1">
    <location>
        <begin position="75"/>
        <end position="82"/>
    </location>
    <ligand>
        <name>substrate</name>
    </ligand>
</feature>
<feature type="binding site" evidence="1">
    <location>
        <begin position="142"/>
        <end position="144"/>
    </location>
    <ligand>
        <name>substrate</name>
    </ligand>
</feature>
<feature type="binding site" evidence="1">
    <location>
        <begin position="155"/>
        <end position="157"/>
    </location>
    <ligand>
        <name>substrate</name>
    </ligand>
</feature>
<feature type="site" description="Lowers pKa of active site Cys" evidence="1">
    <location>
        <position position="139"/>
    </location>
</feature>
<evidence type="ECO:0000255" key="1">
    <source>
        <dbReference type="HAMAP-Rule" id="MF_00013"/>
    </source>
</evidence>
<evidence type="ECO:0000255" key="2">
    <source>
        <dbReference type="PROSITE-ProRule" id="PRU01067"/>
    </source>
</evidence>
<evidence type="ECO:0000305" key="3"/>
<proteinExistence type="inferred from homology"/>
<protein>
    <recommendedName>
        <fullName evidence="1">Octanoyltransferase</fullName>
        <ecNumber evidence="1">2.3.1.181</ecNumber>
    </recommendedName>
    <alternativeName>
        <fullName evidence="1">Lipoate-protein ligase B</fullName>
    </alternativeName>
    <alternativeName>
        <fullName evidence="1">Lipoyl/octanoyl transferase</fullName>
    </alternativeName>
    <alternativeName>
        <fullName evidence="1">Octanoyl-[acyl-carrier-protein]-protein N-octanoyltransferase</fullName>
    </alternativeName>
</protein>
<keyword id="KW-0012">Acyltransferase</keyword>
<keyword id="KW-0963">Cytoplasm</keyword>
<keyword id="KW-0808">Transferase</keyword>
<gene>
    <name evidence="1" type="primary">lipB</name>
    <name type="ordered locus">YPN_1084</name>
    <name type="ORF">YP516_1178</name>
</gene>
<reference key="1">
    <citation type="journal article" date="2006" name="J. Bacteriol.">
        <title>Complete genome sequence of Yersinia pestis strains Antiqua and Nepal516: evidence of gene reduction in an emerging pathogen.</title>
        <authorList>
            <person name="Chain P.S.G."/>
            <person name="Hu P."/>
            <person name="Malfatti S.A."/>
            <person name="Radnedge L."/>
            <person name="Larimer F."/>
            <person name="Vergez L.M."/>
            <person name="Worsham P."/>
            <person name="Chu M.C."/>
            <person name="Andersen G.L."/>
        </authorList>
    </citation>
    <scope>NUCLEOTIDE SEQUENCE [LARGE SCALE GENOMIC DNA]</scope>
    <source>
        <strain>Nepal516</strain>
    </source>
</reference>
<reference key="2">
    <citation type="submission" date="2009-04" db="EMBL/GenBank/DDBJ databases">
        <title>Yersinia pestis Nepal516A whole genome shotgun sequencing project.</title>
        <authorList>
            <person name="Plunkett G. III"/>
            <person name="Anderson B.D."/>
            <person name="Baumler D.J."/>
            <person name="Burland V."/>
            <person name="Cabot E.L."/>
            <person name="Glasner J.D."/>
            <person name="Mau B."/>
            <person name="Neeno-Eckwall E."/>
            <person name="Perna N.T."/>
            <person name="Munk A.C."/>
            <person name="Tapia R."/>
            <person name="Green L.D."/>
            <person name="Rogers Y.C."/>
            <person name="Detter J.C."/>
            <person name="Bruce D.C."/>
            <person name="Brettin T.S."/>
        </authorList>
    </citation>
    <scope>NUCLEOTIDE SEQUENCE [LARGE SCALE GENOMIC DNA]</scope>
    <source>
        <strain>Nepal516</strain>
    </source>
</reference>
<organism>
    <name type="scientific">Yersinia pestis bv. Antiqua (strain Nepal516)</name>
    <dbReference type="NCBI Taxonomy" id="377628"/>
    <lineage>
        <taxon>Bacteria</taxon>
        <taxon>Pseudomonadati</taxon>
        <taxon>Pseudomonadota</taxon>
        <taxon>Gammaproteobacteria</taxon>
        <taxon>Enterobacterales</taxon>
        <taxon>Yersiniaceae</taxon>
        <taxon>Yersinia</taxon>
    </lineage>
</organism>
<comment type="function">
    <text evidence="1">Catalyzes the transfer of endogenously produced octanoic acid from octanoyl-acyl-carrier-protein onto the lipoyl domains of lipoate-dependent enzymes. Lipoyl-ACP can also act as a substrate although octanoyl-ACP is likely to be the physiological substrate.</text>
</comment>
<comment type="catalytic activity">
    <reaction evidence="1">
        <text>octanoyl-[ACP] + L-lysyl-[protein] = N(6)-octanoyl-L-lysyl-[protein] + holo-[ACP] + H(+)</text>
        <dbReference type="Rhea" id="RHEA:17665"/>
        <dbReference type="Rhea" id="RHEA-COMP:9636"/>
        <dbReference type="Rhea" id="RHEA-COMP:9685"/>
        <dbReference type="Rhea" id="RHEA-COMP:9752"/>
        <dbReference type="Rhea" id="RHEA-COMP:9928"/>
        <dbReference type="ChEBI" id="CHEBI:15378"/>
        <dbReference type="ChEBI" id="CHEBI:29969"/>
        <dbReference type="ChEBI" id="CHEBI:64479"/>
        <dbReference type="ChEBI" id="CHEBI:78463"/>
        <dbReference type="ChEBI" id="CHEBI:78809"/>
        <dbReference type="EC" id="2.3.1.181"/>
    </reaction>
</comment>
<comment type="pathway">
    <text evidence="1">Protein modification; protein lipoylation via endogenous pathway; protein N(6)-(lipoyl)lysine from octanoyl-[acyl-carrier-protein]: step 1/2.</text>
</comment>
<comment type="subcellular location">
    <subcellularLocation>
        <location evidence="1">Cytoplasm</location>
    </subcellularLocation>
</comment>
<comment type="miscellaneous">
    <text evidence="1">In the reaction, the free carboxyl group of octanoic acid is attached via an amide linkage to the epsilon-amino group of a specific lysine residue of lipoyl domains of lipoate-dependent enzymes.</text>
</comment>
<comment type="similarity">
    <text evidence="1">Belongs to the LipB family.</text>
</comment>
<comment type="sequence caution" evidence="3">
    <conflict type="erroneous initiation">
        <sequence resource="EMBL-CDS" id="EEO77508"/>
    </conflict>
    <text>Truncated N-terminus.</text>
</comment>
<accession>Q1CKR5</accession>
<accession>C4GR17</accession>